<protein>
    <recommendedName>
        <fullName>Yeast-form wall Protein 1</fullName>
    </recommendedName>
    <alternativeName>
        <fullName>GPI-anchored protein 24</fullName>
    </alternativeName>
    <alternativeName>
        <fullName>Thiol-extractable peptide 1</fullName>
    </alternativeName>
    <alternativeName>
        <fullName>flocculation protein 1</fullName>
    </alternativeName>
</protein>
<feature type="signal peptide" evidence="6">
    <location>
        <begin position="1"/>
        <end position="21"/>
    </location>
</feature>
<feature type="chain" id="PRO_0000424775" description="Yeast-form wall Protein 1">
    <location>
        <begin position="22"/>
        <end position="511"/>
    </location>
</feature>
<feature type="propeptide" id="PRO_0000424776" description="Removed in mature form">
    <location>
        <begin position="512"/>
        <end position="533"/>
    </location>
</feature>
<feature type="region of interest" description="Disordered" evidence="2">
    <location>
        <begin position="161"/>
        <end position="219"/>
    </location>
</feature>
<feature type="region of interest" description="Disordered" evidence="2">
    <location>
        <begin position="418"/>
        <end position="451"/>
    </location>
</feature>
<feature type="compositionally biased region" description="Low complexity" evidence="2">
    <location>
        <begin position="163"/>
        <end position="214"/>
    </location>
</feature>
<feature type="compositionally biased region" description="Low complexity" evidence="2">
    <location>
        <begin position="427"/>
        <end position="451"/>
    </location>
</feature>
<feature type="lipid moiety-binding region" description="GPI-anchor amidated glycine" evidence="16">
    <location>
        <position position="511"/>
    </location>
</feature>
<feature type="glycosylation site" description="N-linked (GlcNAc...) asparagine" evidence="1">
    <location>
        <position position="115"/>
    </location>
</feature>
<keyword id="KW-0130">Cell adhesion</keyword>
<keyword id="KW-0134">Cell wall</keyword>
<keyword id="KW-0903">Direct protein sequencing</keyword>
<keyword id="KW-0325">Glycoprotein</keyword>
<keyword id="KW-0336">GPI-anchor</keyword>
<keyword id="KW-0449">Lipoprotein</keyword>
<keyword id="KW-0472">Membrane</keyword>
<keyword id="KW-1185">Reference proteome</keyword>
<keyword id="KW-0964">Secreted</keyword>
<keyword id="KW-0732">Signal</keyword>
<proteinExistence type="evidence at protein level"/>
<sequence length="533" mass="54278">MKVSTIFAAASALFAATTTLAQDVACLVDNQQVAVVDLDTGVCPFTIPASLAAFFTFVSLEEYNVQFYYTIVNNVRYNTDIRNAGKVINVPARNLYGAGAVPFFQVHLEKQLEANSTAAIRRRLMGETPIVKRDQIDDFIASIENTEGTALEGSTLEVVDYVPGSSSASPSGSASPSGSESGSGSDSATIRSTTVVSSSSCESSGDSAATATGANGESTVTEQNTVVVTITSCHNDACHATTVPATASIGVTTVHGTETIFTTYCPLSSYETVESTKVITITSCSENKCQETTVEATPSTATTVSEGVVTEYVTYCPVSSVETVASTKVITVVACDEHKCHETTAVATPTEVTTVVEGSTTHYVTYKPTGSGPTQGETYATNAITSEGTVYVPKTTAVTTHGSTFETVAYITVTKATPTKGGEQHQPGSPAGAATSAPGAPAPGASGAHASTANKVTVEAQATPGTLTPENTVAGGVNGEQVAVSAKTTISQTTVAKASGSGKAAISTFEGAAAASAGASVLALALIPLAYFI</sequence>
<comment type="function">
    <text evidence="6 16 17">Cell wall protein which plays an anti-adhesive role and promotes dispersal of yeast forms, which allows the organism to seek new sites for colonization.</text>
</comment>
<comment type="subcellular location">
    <subcellularLocation>
        <location>Secreted</location>
    </subcellularLocation>
    <subcellularLocation>
        <location>Secreted</location>
        <location>Cell wall</location>
    </subcellularLocation>
    <subcellularLocation>
        <location evidence="18">Membrane</location>
        <topology evidence="18">Lipid-anchor</topology>
        <topology evidence="18">GPI-anchor</topology>
    </subcellularLocation>
    <text>In yeast cultures, is linked covalently to glucans of the wall matrix, but, as cultures approach stationary phase, accumulates in the medium and is extractable from cells with disulfide-reducing agents. Removed from the cell wall by proteolytic cleavage by SAP9 and SAP10.</text>
</comment>
<comment type="induction">
    <text evidence="3 4 5 6 7 8 9 10 11 12 14 15 16 17">Expression is greatest during yeast exponential-phase growth, but down-regulated in stationary phase and upon filamentation. Expression is also increased during growth in hypoxic conditions. Expression decreases in biofilm cultures and becomes undetectable through late stage biofilm formation. Up-regulated when the extracellular phosphate concentration is low or in presence of Cis-2-dodecenoic acid (BDSF). Repressed during cell wall regeneration. Expression is positively regulated by EFG1 and EFH1, and negatively regulated by SSN6 and SSK1.</text>
</comment>
<comment type="PTM">
    <text evidence="13">The GPI-anchor is attached to the protein in the endoplasmic reticulum and serves to target the protein to the cell surface. There, the glucosamine-inositol phospholipid moiety is cleaved off and the GPI-modified mannoprotein is covalently attached via its lipidless GPI glycan remnant to the 1,6-beta-glucan of the outer cell wall layer.</text>
</comment>
<comment type="PTM">
    <text>Cleaved by SAP9 and SAP10, which leads to its release from the cell wall.</text>
</comment>
<comment type="PTM">
    <text evidence="6">N-glycosylated.</text>
</comment>
<comment type="disruption phenotype">
    <text evidence="6">Leads to increased adhesion and biofilm formation.</text>
</comment>
<comment type="similarity">
    <text evidence="18">Belongs to the flocculin family.</text>
</comment>
<accession>Q59Y31</accession>
<accession>A0A1D8PI92</accession>
<name>YWP1_CANAL</name>
<evidence type="ECO:0000255" key="1"/>
<evidence type="ECO:0000256" key="2">
    <source>
        <dbReference type="SAM" id="MobiDB-lite"/>
    </source>
</evidence>
<evidence type="ECO:0000269" key="3">
    <source>
    </source>
</evidence>
<evidence type="ECO:0000269" key="4">
    <source>
    </source>
</evidence>
<evidence type="ECO:0000269" key="5">
    <source>
    </source>
</evidence>
<evidence type="ECO:0000269" key="6">
    <source>
    </source>
</evidence>
<evidence type="ECO:0000269" key="7">
    <source>
    </source>
</evidence>
<evidence type="ECO:0000269" key="8">
    <source>
    </source>
</evidence>
<evidence type="ECO:0000269" key="9">
    <source>
    </source>
</evidence>
<evidence type="ECO:0000269" key="10">
    <source>
    </source>
</evidence>
<evidence type="ECO:0000269" key="11">
    <source>
    </source>
</evidence>
<evidence type="ECO:0000269" key="12">
    <source>
    </source>
</evidence>
<evidence type="ECO:0000269" key="13">
    <source>
    </source>
</evidence>
<evidence type="ECO:0000269" key="14">
    <source>
    </source>
</evidence>
<evidence type="ECO:0000269" key="15">
    <source>
    </source>
</evidence>
<evidence type="ECO:0000269" key="16">
    <source>
    </source>
</evidence>
<evidence type="ECO:0000269" key="17">
    <source>
    </source>
</evidence>
<evidence type="ECO:0000305" key="18"/>
<gene>
    <name type="primary">YWP1</name>
    <name type="synonym">FLO1</name>
    <name type="synonym">PGA24</name>
    <name type="synonym">TEP1</name>
    <name type="ordered locus">CAALFM_C208590WA</name>
    <name type="ORF">CaO19.11101</name>
    <name type="ORF">CaO19.3618</name>
</gene>
<organism>
    <name type="scientific">Candida albicans (strain SC5314 / ATCC MYA-2876)</name>
    <name type="common">Yeast</name>
    <dbReference type="NCBI Taxonomy" id="237561"/>
    <lineage>
        <taxon>Eukaryota</taxon>
        <taxon>Fungi</taxon>
        <taxon>Dikarya</taxon>
        <taxon>Ascomycota</taxon>
        <taxon>Saccharomycotina</taxon>
        <taxon>Pichiomycetes</taxon>
        <taxon>Debaryomycetaceae</taxon>
        <taxon>Candida/Lodderomyces clade</taxon>
        <taxon>Candida</taxon>
    </lineage>
</organism>
<dbReference type="EMBL" id="CP017624">
    <property type="protein sequence ID" value="AOW27847.1"/>
    <property type="molecule type" value="Genomic_DNA"/>
</dbReference>
<dbReference type="RefSeq" id="XP_714462.1">
    <property type="nucleotide sequence ID" value="XM_709369.2"/>
</dbReference>
<dbReference type="STRING" id="237561.Q59Y31"/>
<dbReference type="GlyCosmos" id="Q59Y31">
    <property type="glycosylation" value="1 site, No reported glycans"/>
</dbReference>
<dbReference type="EnsemblFungi" id="C2_08590W_A-T">
    <property type="protein sequence ID" value="C2_08590W_A-T-p1"/>
    <property type="gene ID" value="C2_08590W_A"/>
</dbReference>
<dbReference type="GeneID" id="3643915"/>
<dbReference type="KEGG" id="cal:CAALFM_C208590WA"/>
<dbReference type="CGD" id="CAL0000183265">
    <property type="gene designation" value="YWP1"/>
</dbReference>
<dbReference type="VEuPathDB" id="FungiDB:C2_08590W_A"/>
<dbReference type="eggNOG" id="ENOG502S4SV">
    <property type="taxonomic scope" value="Eukaryota"/>
</dbReference>
<dbReference type="HOGENOM" id="CLU_029456_0_0_1"/>
<dbReference type="InParanoid" id="Q59Y31"/>
<dbReference type="OrthoDB" id="4096612at2759"/>
<dbReference type="PRO" id="PR:Q59Y31"/>
<dbReference type="Proteomes" id="UP000000559">
    <property type="component" value="Chromosome 2"/>
</dbReference>
<dbReference type="GO" id="GO:0009986">
    <property type="term" value="C:cell surface"/>
    <property type="evidence" value="ECO:0000314"/>
    <property type="project" value="CGD"/>
</dbReference>
<dbReference type="GO" id="GO:0005576">
    <property type="term" value="C:extracellular region"/>
    <property type="evidence" value="ECO:0000314"/>
    <property type="project" value="CGD"/>
</dbReference>
<dbReference type="GO" id="GO:1903561">
    <property type="term" value="C:extracellular vesicle"/>
    <property type="evidence" value="ECO:0000314"/>
    <property type="project" value="CGD"/>
</dbReference>
<dbReference type="GO" id="GO:0009277">
    <property type="term" value="C:fungal-type cell wall"/>
    <property type="evidence" value="ECO:0000314"/>
    <property type="project" value="CGD"/>
</dbReference>
<dbReference type="GO" id="GO:0030446">
    <property type="term" value="C:hyphal cell wall"/>
    <property type="evidence" value="ECO:0000314"/>
    <property type="project" value="CGD"/>
</dbReference>
<dbReference type="GO" id="GO:0098552">
    <property type="term" value="C:side of membrane"/>
    <property type="evidence" value="ECO:0007669"/>
    <property type="project" value="UniProtKB-KW"/>
</dbReference>
<dbReference type="GO" id="GO:0030445">
    <property type="term" value="C:yeast-form cell wall"/>
    <property type="evidence" value="ECO:0000314"/>
    <property type="project" value="CGD"/>
</dbReference>
<dbReference type="GO" id="GO:0044406">
    <property type="term" value="P:adhesion of symbiont to host"/>
    <property type="evidence" value="ECO:0000314"/>
    <property type="project" value="CGD"/>
</dbReference>
<dbReference type="GO" id="GO:0007155">
    <property type="term" value="P:cell adhesion"/>
    <property type="evidence" value="ECO:0007669"/>
    <property type="project" value="UniProtKB-KW"/>
</dbReference>
<dbReference type="GO" id="GO:0044010">
    <property type="term" value="P:single-species biofilm formation"/>
    <property type="evidence" value="ECO:0000315"/>
    <property type="project" value="CGD"/>
</dbReference>
<dbReference type="GO" id="GO:0044011">
    <property type="term" value="P:single-species biofilm formation on inanimate substrate"/>
    <property type="evidence" value="ECO:0000316"/>
    <property type="project" value="CGD"/>
</dbReference>
<dbReference type="InterPro" id="IPR025928">
    <property type="entry name" value="Flocculin_t3_rpt"/>
</dbReference>
<dbReference type="Pfam" id="PF13928">
    <property type="entry name" value="Flocculin_t3"/>
    <property type="match status" value="3"/>
</dbReference>
<reference key="1">
    <citation type="journal article" date="2004" name="Proc. Natl. Acad. Sci. U.S.A.">
        <title>The diploid genome sequence of Candida albicans.</title>
        <authorList>
            <person name="Jones T."/>
            <person name="Federspiel N.A."/>
            <person name="Chibana H."/>
            <person name="Dungan J."/>
            <person name="Kalman S."/>
            <person name="Magee B.B."/>
            <person name="Newport G."/>
            <person name="Thorstenson Y.R."/>
            <person name="Agabian N."/>
            <person name="Magee P.T."/>
            <person name="Davis R.W."/>
            <person name="Scherer S."/>
        </authorList>
    </citation>
    <scope>NUCLEOTIDE SEQUENCE [LARGE SCALE GENOMIC DNA]</scope>
    <source>
        <strain>SC5314 / ATCC MYA-2876</strain>
    </source>
</reference>
<reference key="2">
    <citation type="journal article" date="2007" name="Genome Biol.">
        <title>Assembly of the Candida albicans genome into sixteen supercontigs aligned on the eight chromosomes.</title>
        <authorList>
            <person name="van het Hoog M."/>
            <person name="Rast T.J."/>
            <person name="Martchenko M."/>
            <person name="Grindle S."/>
            <person name="Dignard D."/>
            <person name="Hogues H."/>
            <person name="Cuomo C."/>
            <person name="Berriman M."/>
            <person name="Scherer S."/>
            <person name="Magee B.B."/>
            <person name="Whiteway M."/>
            <person name="Chibana H."/>
            <person name="Nantel A."/>
            <person name="Magee P.T."/>
        </authorList>
    </citation>
    <scope>GENOME REANNOTATION</scope>
    <source>
        <strain>SC5314 / ATCC MYA-2876</strain>
    </source>
</reference>
<reference key="3">
    <citation type="journal article" date="2013" name="Genome Biol.">
        <title>Assembly of a phased diploid Candida albicans genome facilitates allele-specific measurements and provides a simple model for repeat and indel structure.</title>
        <authorList>
            <person name="Muzzey D."/>
            <person name="Schwartz K."/>
            <person name="Weissman J.S."/>
            <person name="Sherlock G."/>
        </authorList>
    </citation>
    <scope>NUCLEOTIDE SEQUENCE [LARGE SCALE GENOMIC DNA]</scope>
    <scope>GENOME REANNOTATION</scope>
    <source>
        <strain>SC5314 / ATCC MYA-2876</strain>
    </source>
</reference>
<reference key="4">
    <citation type="journal article" date="2005" name="Microbiology">
        <title>Yeast wall protein 1 of Candida albicans.</title>
        <authorList>
            <person name="Granger B.L."/>
            <person name="Flenniken M.L."/>
            <person name="Davis D.A."/>
            <person name="Mitchell A.P."/>
            <person name="Cutler J.E."/>
        </authorList>
    </citation>
    <scope>PROTEIN SEQUENCE OF 22-33</scope>
    <scope>GLYCOSYLATION</scope>
    <scope>DISRUPTION PHENOTYPE</scope>
    <scope>FUNCTION</scope>
    <scope>INDUCTION</scope>
    <scope>SUBCELLULAR LOCATION</scope>
</reference>
<reference key="5">
    <citation type="journal article" date="2003" name="Eukaryot. Cell">
        <title>Candida albicans response regulator gene SSK1 regulates a subset of genes whose functions are associated with cell wall biosynthesis and adaptation to oxidative stress.</title>
        <authorList>
            <person name="Chauhan N."/>
            <person name="Inglis D."/>
            <person name="Roman E."/>
            <person name="Pla J."/>
            <person name="Li D."/>
            <person name="Calera J.A."/>
            <person name="Calderone R."/>
        </authorList>
    </citation>
    <scope>INDUCTION</scope>
</reference>
<reference key="6">
    <citation type="journal article" date="2003" name="Yeast">
        <title>Genome-wide identification of fungal GPI proteins.</title>
        <authorList>
            <person name="De Groot P.W."/>
            <person name="Hellingwerf K.J."/>
            <person name="Klis F.M."/>
        </authorList>
    </citation>
    <scope>PREDICTION OF GPI-ANCHOR</scope>
</reference>
<reference key="7">
    <citation type="journal article" date="2004" name="Mol. Biol. Cell">
        <title>APSES proteins regulate morphogenesis and metabolism in Candida albicans.</title>
        <authorList>
            <person name="Doedt T."/>
            <person name="Krishnamurthy S."/>
            <person name="Bockmuhl D.P."/>
            <person name="Tebarth B."/>
            <person name="Stempel C."/>
            <person name="Russell C.L."/>
            <person name="Brown A.J."/>
            <person name="Ernst J.F."/>
        </authorList>
    </citation>
    <scope>INDUCTION</scope>
</reference>
<reference key="8">
    <citation type="journal article" date="2005" name="Eukaryot. Cell">
        <title>Genome-wide transcription profiling of the early phase of biofilm formation by Candida albicans.</title>
        <authorList>
            <person name="Murillo L.A."/>
            <person name="Newport G."/>
            <person name="Lan C.Y."/>
            <person name="Habelitz S."/>
            <person name="Dungan J."/>
            <person name="Agabian N.M."/>
        </authorList>
    </citation>
    <scope>INDUCTION</scope>
</reference>
<reference key="9">
    <citation type="journal article" date="2005" name="Mol. Biol. Cell">
        <title>Global roles of Ssn6 in Tup1- and Nrg1-dependent gene regulation in the fungal pathogen, Candida albicans.</title>
        <authorList>
            <person name="Garcia-Sanchez S."/>
            <person name="Mavor A.L."/>
            <person name="Russell C.L."/>
            <person name="Argimon S."/>
            <person name="Dennison P."/>
            <person name="Enjalbert B."/>
            <person name="Brown A.J."/>
        </authorList>
    </citation>
    <scope>INDUCTION</scope>
</reference>
<reference key="10">
    <citation type="journal article" date="2006" name="Fungal Genet. Biol.">
        <title>Genomic response programs of Candida albicans following protoplasting and regeneration.</title>
        <authorList>
            <person name="Castillo L."/>
            <person name="Martinez A.I."/>
            <person name="Garcera A."/>
            <person name="Garcia-Martinez J."/>
            <person name="Ruiz-Herrera J."/>
            <person name="Valentin E."/>
            <person name="Sentandreu R."/>
        </authorList>
    </citation>
    <scope>INDUCTION</scope>
</reference>
<reference key="11">
    <citation type="journal article" date="2007" name="Eukaryot. Cell">
        <title>Candida albicans Sun41p, a putative glycosidase, is involved in morphogenesis, cell wall biogenesis, and biofilm formation.</title>
        <authorList>
            <person name="Hiller E."/>
            <person name="Heine S."/>
            <person name="Brunner H."/>
            <person name="Rupp S."/>
        </authorList>
    </citation>
    <scope>IDENTIFICATION BY MASS SPECTROMETRY</scope>
    <scope>SUBCELLULAR LOCATION</scope>
</reference>
<reference key="12">
    <citation type="journal article" date="2008" name="Genomics Proteomics Bioinformatics">
        <title>Increased filamentous growth of Candida albicans in simulated microgravity.</title>
        <authorList>
            <person name="Altenburg S.D."/>
            <person name="Nielsen-Preiss S.M."/>
            <person name="Hyman L.E."/>
        </authorList>
    </citation>
    <scope>INDUCTION</scope>
</reference>
<reference key="13">
    <citation type="journal article" date="2008" name="Proteomics">
        <title>A study of the Candida albicans cell wall proteome.</title>
        <authorList>
            <person name="Castillo L."/>
            <person name="Calvo E."/>
            <person name="Martinez A.I."/>
            <person name="Ruiz-Herrera J."/>
            <person name="Valentin E."/>
            <person name="Lopez J.A."/>
            <person name="Sentandreu R."/>
        </authorList>
    </citation>
    <scope>IDENTIFICATION BY MASS SPECTROMETRY</scope>
    <scope>SUBCELLULAR LOCATION</scope>
</reference>
<reference key="14">
    <citation type="journal article" date="2009" name="Fungal Genet. Biol.">
        <title>Trifluoromethanesulfonic acid-based proteomic analysis of cell wall and secreted proteins of the ascomycetous fungi Neurospora crassa and Candida albicans.</title>
        <authorList>
            <person name="Maddi A."/>
            <person name="Bowman S.M."/>
            <person name="Free S.J."/>
        </authorList>
    </citation>
    <scope>IDENTIFICATION BY MASS SPECTROMETRY</scope>
    <scope>SUBCELLULAR LOCATION</scope>
    <scope>INDUCTION</scope>
</reference>
<reference key="15">
    <citation type="journal article" date="2010" name="Eukaryot. Cell">
        <title>Regulation of the hypoxic response in Candida albicans.</title>
        <authorList>
            <person name="Synnott J.M."/>
            <person name="Guida A."/>
            <person name="Mulhern-Haughey S."/>
            <person name="Higgins D.G."/>
            <person name="Butler G."/>
        </authorList>
    </citation>
    <scope>INDUCTION</scope>
</reference>
<reference key="16">
    <citation type="journal article" date="2011" name="Eukaryot. Cell">
        <title>Proteolytic cleavage of covalently linked cell wall proteins by Candida albicans Sap9 and Sap10.</title>
        <authorList>
            <person name="Schild L."/>
            <person name="Heyken A."/>
            <person name="de Groot P.W."/>
            <person name="Hiller E."/>
            <person name="Mock M."/>
            <person name="de Koster C."/>
            <person name="Horn U."/>
            <person name="Rupp S."/>
            <person name="Hube B."/>
        </authorList>
    </citation>
    <scope>SUBCELLULAR LOCATION</scope>
    <scope>CLEAVAGE BY SAP9 AND SAP10</scope>
</reference>
<reference key="17">
    <citation type="journal article" date="2011" name="Eukaryot. Cell">
        <title>Zap1 control of cell-cell signaling in Candida albicans biofilms.</title>
        <authorList>
            <person name="Ganguly S."/>
            <person name="Bishop A.C."/>
            <person name="Xu W."/>
            <person name="Ghosh S."/>
            <person name="Nickerson K.W."/>
            <person name="Lanni F."/>
            <person name="Patton-Vogt J."/>
            <person name="Mitchell A.P."/>
        </authorList>
    </citation>
    <scope>INDUCTION</scope>
</reference>
<reference key="18">
    <citation type="journal article" date="2011" name="Microbiology">
        <title>Mass spectrometric quantification of the adaptations in the wall proteome of Candida albicans in response to ambient pH.</title>
        <authorList>
            <person name="Sosinska G.J."/>
            <person name="de Koning L.J."/>
            <person name="de Groot P.W."/>
            <person name="Manders E.M."/>
            <person name="Dekker H.L."/>
            <person name="Hellingwerf K.J."/>
            <person name="de Koster C.G."/>
            <person name="Klis F.M."/>
        </authorList>
    </citation>
    <scope>IDENTIFICATION BY MASS SPECTROMETRY</scope>
    <scope>SUBCELLULAR LOCATION</scope>
    <scope>INDUCTION</scope>
</reference>
<reference key="19">
    <citation type="journal article" date="2011" name="Microbiology">
        <title>Hyphal induction in the human fungal pathogen Candida albicans reveals a characteristic wall protein profile.</title>
        <authorList>
            <person name="Heilmann C.J."/>
            <person name="Sorgo A.G."/>
            <person name="Siliakus A.R."/>
            <person name="Dekker H.L."/>
            <person name="Brul S."/>
            <person name="de Koster C.G."/>
            <person name="de Koning L.J."/>
            <person name="Klis F.M."/>
        </authorList>
    </citation>
    <scope>IDENTIFICATION BY MASS SPECTROMETRY</scope>
    <scope>SUBCELLULAR LOCATION</scope>
    <scope>INDUCTION</scope>
</reference>
<reference key="20">
    <citation type="journal article" date="2012" name="Eukaryot. Cell">
        <title>Insight into the antiadhesive effect of yeast wall protein 1 of Candida albicans.</title>
        <authorList>
            <person name="Granger B.L."/>
        </authorList>
    </citation>
    <scope>FUNCTION</scope>
    <scope>INDUCTION</scope>
    <scope>GPI-ANCHOR AT GLY-511</scope>
    <scope>SUBCELLULAR LOCATION</scope>
</reference>
<reference key="21">
    <citation type="journal article" date="2013" name="Eukaryot. Cell">
        <title>Surface stress induces a conserved cell wall stress response in the pathogenic fungus Candida albicans.</title>
        <authorList>
            <person name="Heilmann C.J."/>
            <person name="Sorgo A.G."/>
            <person name="Mohammadi S."/>
            <person name="Sosinska G.J."/>
            <person name="de Koster C.G."/>
            <person name="Brul S."/>
            <person name="de Koning L.J."/>
            <person name="Klis F.M."/>
        </authorList>
    </citation>
    <scope>IDENTIFICATION BY MASS SPECTROMETRY</scope>
    <scope>SUBCELLULAR LOCATION</scope>
</reference>
<reference key="22">
    <citation type="journal article" date="2013" name="Microb. Pathog.">
        <title>BDSF inhibits Candida albicans adherence to urinary catheters.</title>
        <authorList>
            <person name="Tian J."/>
            <person name="Weng L.X."/>
            <person name="Zhang Y.Q."/>
            <person name="Wang L.H."/>
        </authorList>
    </citation>
    <scope>INDUCTION</scope>
    <scope>FUNCTION</scope>
</reference>
<reference key="23">
    <citation type="journal article" date="2013" name="Mol. Microbiol.">
        <title>A family of secreted pathogenesis-related proteins in Candida albicans.</title>
        <authorList>
            <person name="Rohm M."/>
            <person name="Lindemann E."/>
            <person name="Hiller E."/>
            <person name="Ermert D."/>
            <person name="Lemuth K."/>
            <person name="Trkulja D."/>
            <person name="Sogukpinar O."/>
            <person name="Brunner H."/>
            <person name="Rupp S."/>
            <person name="Urban C.F."/>
            <person name="Sohn K."/>
        </authorList>
    </citation>
    <scope>IDENTIFICATION BY MASS SPECTROMETRY</scope>
    <scope>SUBCELLULAR LOCATION</scope>
</reference>